<keyword id="KW-1003">Cell membrane</keyword>
<keyword id="KW-1015">Disulfide bond</keyword>
<keyword id="KW-0297">G-protein coupled receptor</keyword>
<keyword id="KW-0325">Glycoprotein</keyword>
<keyword id="KW-0472">Membrane</keyword>
<keyword id="KW-0552">Olfaction</keyword>
<keyword id="KW-0675">Receptor</keyword>
<keyword id="KW-1185">Reference proteome</keyword>
<keyword id="KW-0716">Sensory transduction</keyword>
<keyword id="KW-0807">Transducer</keyword>
<keyword id="KW-0812">Transmembrane</keyword>
<keyword id="KW-1133">Transmembrane helix</keyword>
<sequence>MGKTKNTSLDAVVTDFILLGLSHPPNLRSLLFLVFFIIYILTQLGNLLILLTMWADPKLCARPMYILLGVLSFLDMWLSSVTVPLLILDFTPSIKAIPFGGCVAQLYFFHFLGSTQCFLYTLMAYDRYLAICQPLRYPVLMNGRLCTVLVAGAWVAGSMHGSIQATLTFRLPYCGPNQVDYFICDIPAVLRLACADTTVNELVTFVDVGVVAASCFMLILLSYANIVNAILKIRTTDGRRRAFSTCGSHLIVVTVYYVPCIFIYLRAGSKDPLDGAAAVFYTVVTPLLNPLIYTLRNQEVKSALKRITAG</sequence>
<gene>
    <name type="primary">OR10G2</name>
</gene>
<accession>Q8NGC3</accession>
<accession>B2RPD0</accession>
<comment type="function">
    <text evidence="3">Odorant receptor.</text>
</comment>
<comment type="subcellular location">
    <subcellularLocation>
        <location>Cell membrane</location>
        <topology>Multi-pass membrane protein</topology>
    </subcellularLocation>
</comment>
<comment type="similarity">
    <text evidence="2">Belongs to the G-protein coupled receptor 1 family.</text>
</comment>
<comment type="online information" name="Human Olfactory Receptor Data Exploratorium (HORDE)">
    <link uri="http://genome.weizmann.ac.il/horde/card/index/symbol:OR10G2"/>
</comment>
<dbReference type="EMBL" id="AB065894">
    <property type="protein sequence ID" value="BAC06110.1"/>
    <property type="molecule type" value="Genomic_DNA"/>
</dbReference>
<dbReference type="EMBL" id="CH471078">
    <property type="protein sequence ID" value="EAW66374.1"/>
    <property type="molecule type" value="Genomic_DNA"/>
</dbReference>
<dbReference type="EMBL" id="BC137371">
    <property type="protein sequence ID" value="AAI37372.1"/>
    <property type="molecule type" value="mRNA"/>
</dbReference>
<dbReference type="EMBL" id="BC137382">
    <property type="protein sequence ID" value="AAI37383.1"/>
    <property type="molecule type" value="mRNA"/>
</dbReference>
<dbReference type="CCDS" id="CCDS32047.1"/>
<dbReference type="RefSeq" id="NP_001005466.2">
    <property type="nucleotide sequence ID" value="NM_001005466.2"/>
</dbReference>
<dbReference type="SMR" id="Q8NGC3"/>
<dbReference type="FunCoup" id="Q8NGC3">
    <property type="interactions" value="452"/>
</dbReference>
<dbReference type="IntAct" id="Q8NGC3">
    <property type="interactions" value="1"/>
</dbReference>
<dbReference type="STRING" id="9606.ENSP00000445383"/>
<dbReference type="GlyCosmos" id="Q8NGC3">
    <property type="glycosylation" value="1 site, No reported glycans"/>
</dbReference>
<dbReference type="GlyGen" id="Q8NGC3">
    <property type="glycosylation" value="1 site"/>
</dbReference>
<dbReference type="BioMuta" id="OR10G2"/>
<dbReference type="DMDM" id="38372664"/>
<dbReference type="MassIVE" id="Q8NGC3"/>
<dbReference type="PaxDb" id="9606-ENSP00000445383"/>
<dbReference type="PeptideAtlas" id="Q8NGC3"/>
<dbReference type="Antibodypedia" id="58800">
    <property type="antibodies" value="105 antibodies from 19 providers"/>
</dbReference>
<dbReference type="Ensembl" id="ENST00000542433.1">
    <property type="protein sequence ID" value="ENSP00000445383.1"/>
    <property type="gene ID" value="ENSG00000255582.1"/>
</dbReference>
<dbReference type="GeneID" id="26534"/>
<dbReference type="KEGG" id="hsa:26534"/>
<dbReference type="MANE-Select" id="ENST00000542433.1">
    <property type="protein sequence ID" value="ENSP00000445383.1"/>
    <property type="RefSeq nucleotide sequence ID" value="NM_001005466.2"/>
    <property type="RefSeq protein sequence ID" value="NP_001005466.2"/>
</dbReference>
<dbReference type="UCSC" id="uc032ate.2">
    <property type="organism name" value="human"/>
</dbReference>
<dbReference type="AGR" id="HGNC:8170"/>
<dbReference type="CTD" id="26534"/>
<dbReference type="GeneCards" id="OR10G2"/>
<dbReference type="HGNC" id="HGNC:8170">
    <property type="gene designation" value="OR10G2"/>
</dbReference>
<dbReference type="HPA" id="ENSG00000255582">
    <property type="expression patterns" value="Not detected"/>
</dbReference>
<dbReference type="neXtProt" id="NX_Q8NGC3"/>
<dbReference type="PharmGKB" id="PA31969"/>
<dbReference type="VEuPathDB" id="HostDB:ENSG00000255582"/>
<dbReference type="eggNOG" id="ENOG502SI7K">
    <property type="taxonomic scope" value="Eukaryota"/>
</dbReference>
<dbReference type="GeneTree" id="ENSGT01050000244869"/>
<dbReference type="HOGENOM" id="CLU_012526_8_1_1"/>
<dbReference type="InParanoid" id="Q8NGC3"/>
<dbReference type="OMA" id="YYIPCIF"/>
<dbReference type="OrthoDB" id="9437243at2759"/>
<dbReference type="PAN-GO" id="Q8NGC3">
    <property type="GO annotations" value="1 GO annotation based on evolutionary models"/>
</dbReference>
<dbReference type="PhylomeDB" id="Q8NGC3"/>
<dbReference type="TreeFam" id="TF336512"/>
<dbReference type="PathwayCommons" id="Q8NGC3"/>
<dbReference type="Reactome" id="R-HSA-9752946">
    <property type="pathway name" value="Expression and translocation of olfactory receptors"/>
</dbReference>
<dbReference type="Pharos" id="Q8NGC3">
    <property type="development level" value="Tdark"/>
</dbReference>
<dbReference type="PRO" id="PR:Q8NGC3"/>
<dbReference type="Proteomes" id="UP000005640">
    <property type="component" value="Chromosome 14"/>
</dbReference>
<dbReference type="RNAct" id="Q8NGC3">
    <property type="molecule type" value="protein"/>
</dbReference>
<dbReference type="Bgee" id="ENSG00000255582">
    <property type="expression patterns" value="Expressed in lymph node and 2 other cell types or tissues"/>
</dbReference>
<dbReference type="GO" id="GO:0005886">
    <property type="term" value="C:plasma membrane"/>
    <property type="evidence" value="ECO:0000318"/>
    <property type="project" value="GO_Central"/>
</dbReference>
<dbReference type="GO" id="GO:0004930">
    <property type="term" value="F:G protein-coupled receptor activity"/>
    <property type="evidence" value="ECO:0007669"/>
    <property type="project" value="UniProtKB-KW"/>
</dbReference>
<dbReference type="GO" id="GO:0004984">
    <property type="term" value="F:olfactory receptor activity"/>
    <property type="evidence" value="ECO:0000318"/>
    <property type="project" value="GO_Central"/>
</dbReference>
<dbReference type="GO" id="GO:0050911">
    <property type="term" value="P:detection of chemical stimulus involved in sensory perception of smell"/>
    <property type="evidence" value="ECO:0000318"/>
    <property type="project" value="GO_Central"/>
</dbReference>
<dbReference type="CDD" id="cd15916">
    <property type="entry name" value="7tmA_OR10G-like"/>
    <property type="match status" value="1"/>
</dbReference>
<dbReference type="FunFam" id="1.20.1070.10:FF:000001">
    <property type="entry name" value="Olfactory receptor"/>
    <property type="match status" value="1"/>
</dbReference>
<dbReference type="Gene3D" id="1.20.1070.10">
    <property type="entry name" value="Rhodopsin 7-helix transmembrane proteins"/>
    <property type="match status" value="1"/>
</dbReference>
<dbReference type="InterPro" id="IPR000276">
    <property type="entry name" value="GPCR_Rhodpsn"/>
</dbReference>
<dbReference type="InterPro" id="IPR017452">
    <property type="entry name" value="GPCR_Rhodpsn_7TM"/>
</dbReference>
<dbReference type="InterPro" id="IPR000725">
    <property type="entry name" value="Olfact_rcpt"/>
</dbReference>
<dbReference type="PANTHER" id="PTHR26453">
    <property type="entry name" value="OLFACTORY RECEPTOR"/>
    <property type="match status" value="1"/>
</dbReference>
<dbReference type="Pfam" id="PF13853">
    <property type="entry name" value="7tm_4"/>
    <property type="match status" value="1"/>
</dbReference>
<dbReference type="PRINTS" id="PR00237">
    <property type="entry name" value="GPCRRHODOPSN"/>
</dbReference>
<dbReference type="PRINTS" id="PR00245">
    <property type="entry name" value="OLFACTORYR"/>
</dbReference>
<dbReference type="SUPFAM" id="SSF81321">
    <property type="entry name" value="Family A G protein-coupled receptor-like"/>
    <property type="match status" value="1"/>
</dbReference>
<dbReference type="PROSITE" id="PS50262">
    <property type="entry name" value="G_PROTEIN_RECEP_F1_2"/>
    <property type="match status" value="1"/>
</dbReference>
<evidence type="ECO:0000255" key="1"/>
<evidence type="ECO:0000255" key="2">
    <source>
        <dbReference type="PROSITE-ProRule" id="PRU00521"/>
    </source>
</evidence>
<evidence type="ECO:0000305" key="3"/>
<protein>
    <recommendedName>
        <fullName>Olfactory receptor 10G2</fullName>
    </recommendedName>
</protein>
<reference key="1">
    <citation type="submission" date="2001-07" db="EMBL/GenBank/DDBJ databases">
        <title>Genome-wide discovery and analysis of human seven transmembrane helix receptor genes.</title>
        <authorList>
            <person name="Suwa M."/>
            <person name="Sato T."/>
            <person name="Okouchi I."/>
            <person name="Arita M."/>
            <person name="Futami K."/>
            <person name="Matsumoto S."/>
            <person name="Tsutsumi S."/>
            <person name="Aburatani H."/>
            <person name="Asai K."/>
            <person name="Akiyama Y."/>
        </authorList>
    </citation>
    <scope>NUCLEOTIDE SEQUENCE [GENOMIC DNA]</scope>
    <scope>VARIANTS ARG-85; HIS-136; ARG-187; ARG-209; HIS-228 AND ALA-236</scope>
</reference>
<reference key="2">
    <citation type="submission" date="2005-09" db="EMBL/GenBank/DDBJ databases">
        <authorList>
            <person name="Mural R.J."/>
            <person name="Istrail S."/>
            <person name="Sutton G.G."/>
            <person name="Florea L."/>
            <person name="Halpern A.L."/>
            <person name="Mobarry C.M."/>
            <person name="Lippert R."/>
            <person name="Walenz B."/>
            <person name="Shatkay H."/>
            <person name="Dew I."/>
            <person name="Miller J.R."/>
            <person name="Flanigan M.J."/>
            <person name="Edwards N.J."/>
            <person name="Bolanos R."/>
            <person name="Fasulo D."/>
            <person name="Halldorsson B.V."/>
            <person name="Hannenhalli S."/>
            <person name="Turner R."/>
            <person name="Yooseph S."/>
            <person name="Lu F."/>
            <person name="Nusskern D.R."/>
            <person name="Shue B.C."/>
            <person name="Zheng X.H."/>
            <person name="Zhong F."/>
            <person name="Delcher A.L."/>
            <person name="Huson D.H."/>
            <person name="Kravitz S.A."/>
            <person name="Mouchard L."/>
            <person name="Reinert K."/>
            <person name="Remington K.A."/>
            <person name="Clark A.G."/>
            <person name="Waterman M.S."/>
            <person name="Eichler E.E."/>
            <person name="Adams M.D."/>
            <person name="Hunkapiller M.W."/>
            <person name="Myers E.W."/>
            <person name="Venter J.C."/>
        </authorList>
    </citation>
    <scope>NUCLEOTIDE SEQUENCE [LARGE SCALE GENOMIC DNA]</scope>
</reference>
<reference key="3">
    <citation type="journal article" date="2004" name="Genome Res.">
        <title>The status, quality, and expansion of the NIH full-length cDNA project: the Mammalian Gene Collection (MGC).</title>
        <authorList>
            <consortium name="The MGC Project Team"/>
        </authorList>
    </citation>
    <scope>NUCLEOTIDE SEQUENCE [LARGE SCALE MRNA]</scope>
    <scope>VARIANTS ARG-85; HIS-136; ARG-187; ARG-209; HIS-228 AND ALA-236</scope>
</reference>
<feature type="chain" id="PRO_0000150695" description="Olfactory receptor 10G2">
    <location>
        <begin position="1"/>
        <end position="310"/>
    </location>
</feature>
<feature type="topological domain" description="Extracellular" evidence="1">
    <location>
        <begin position="1"/>
        <end position="29"/>
    </location>
</feature>
<feature type="transmembrane region" description="Helical; Name=1" evidence="1">
    <location>
        <begin position="30"/>
        <end position="50"/>
    </location>
</feature>
<feature type="topological domain" description="Cytoplasmic" evidence="1">
    <location>
        <begin position="51"/>
        <end position="58"/>
    </location>
</feature>
<feature type="transmembrane region" description="Helical; Name=2" evidence="1">
    <location>
        <begin position="59"/>
        <end position="80"/>
    </location>
</feature>
<feature type="topological domain" description="Extracellular" evidence="1">
    <location>
        <begin position="81"/>
        <end position="104"/>
    </location>
</feature>
<feature type="transmembrane region" description="Helical; Name=3" evidence="1">
    <location>
        <begin position="105"/>
        <end position="125"/>
    </location>
</feature>
<feature type="topological domain" description="Cytoplasmic" evidence="1">
    <location>
        <begin position="126"/>
        <end position="144"/>
    </location>
</feature>
<feature type="transmembrane region" description="Helical; Name=4" evidence="1">
    <location>
        <begin position="145"/>
        <end position="165"/>
    </location>
</feature>
<feature type="topological domain" description="Extracellular" evidence="1">
    <location>
        <begin position="166"/>
        <end position="202"/>
    </location>
</feature>
<feature type="transmembrane region" description="Helical; Name=5" evidence="1">
    <location>
        <begin position="203"/>
        <end position="222"/>
    </location>
</feature>
<feature type="topological domain" description="Cytoplasmic" evidence="1">
    <location>
        <begin position="223"/>
        <end position="242"/>
    </location>
</feature>
<feature type="transmembrane region" description="Helical; Name=6" evidence="1">
    <location>
        <begin position="243"/>
        <end position="263"/>
    </location>
</feature>
<feature type="topological domain" description="Extracellular" evidence="1">
    <location>
        <begin position="264"/>
        <end position="274"/>
    </location>
</feature>
<feature type="transmembrane region" description="Helical; Name=7" evidence="1">
    <location>
        <begin position="275"/>
        <end position="295"/>
    </location>
</feature>
<feature type="topological domain" description="Cytoplasmic" evidence="1">
    <location>
        <begin position="296"/>
        <end position="310"/>
    </location>
</feature>
<feature type="glycosylation site" description="N-linked (GlcNAc...) asparagine" evidence="1">
    <location>
        <position position="6"/>
    </location>
</feature>
<feature type="disulfide bond" evidence="2">
    <location>
        <begin position="102"/>
        <end position="194"/>
    </location>
</feature>
<feature type="sequence variant" id="VAR_053270" description="In dbSNP:rs10146821.">
    <original>L</original>
    <variation>F</variation>
    <location>
        <position position="67"/>
    </location>
</feature>
<feature type="sequence variant" id="VAR_053271" description="In dbSNP:rs41314525.">
    <original>L</original>
    <variation>R</variation>
    <location>
        <position position="85"/>
    </location>
</feature>
<feature type="sequence variant" id="VAR_085741" description="In dbSNP:rs10138694.">
    <original>R</original>
    <variation>H</variation>
    <location>
        <position position="136"/>
    </location>
</feature>
<feature type="sequence variant" id="VAR_053272" description="In dbSNP:rs35963889.">
    <original>P</original>
    <variation>R</variation>
    <location>
        <position position="187"/>
    </location>
</feature>
<feature type="sequence variant" id="VAR_053273" description="In dbSNP:rs12894405.">
    <original>G</original>
    <variation>R</variation>
    <location>
        <position position="209"/>
    </location>
</feature>
<feature type="sequence variant" id="VAR_085742" description="In dbSNP:rs200792644.">
    <original>N</original>
    <variation>H</variation>
    <location>
        <position position="228"/>
    </location>
</feature>
<feature type="sequence variant" id="VAR_085743" description="In dbSNP:rs41307110.">
    <original>T</original>
    <variation>A</variation>
    <location>
        <position position="236"/>
    </location>
</feature>
<proteinExistence type="evidence at transcript level"/>
<organism>
    <name type="scientific">Homo sapiens</name>
    <name type="common">Human</name>
    <dbReference type="NCBI Taxonomy" id="9606"/>
    <lineage>
        <taxon>Eukaryota</taxon>
        <taxon>Metazoa</taxon>
        <taxon>Chordata</taxon>
        <taxon>Craniata</taxon>
        <taxon>Vertebrata</taxon>
        <taxon>Euteleostomi</taxon>
        <taxon>Mammalia</taxon>
        <taxon>Eutheria</taxon>
        <taxon>Euarchontoglires</taxon>
        <taxon>Primates</taxon>
        <taxon>Haplorrhini</taxon>
        <taxon>Catarrhini</taxon>
        <taxon>Hominidae</taxon>
        <taxon>Homo</taxon>
    </lineage>
</organism>
<name>O10G2_HUMAN</name>